<sequence length="534" mass="60338">MATGLQVPLPWLATGLLLLLSVQPWAESGKVLVVPIDGSHWLSMREVLRELHARGHQAVVLTPEVNMHIKEENFFTLTTYAISWTQDEFDRHVLGHTQLYFETEHFLKKFFRSMAMLNNMSLVYHRSCVELLHNEALIRHLNATSFDVVLTDPVNLCAAVLAKYLSIPTVFFLRNIPCDLDFKGTQCPNPSSYIPRLLTTNSDHMTFMQRVKNMLYPLALSYICHAFSAPYASLASELFQREVSVVDILSHASVWLFRGDFVMDYPRPIMPNMVFIGGINCANRKPLSQEFEAYINASGEHGIVVFSLGSMVSEIPEKKAMAIADALGKIPQTVLWRYTGTRPSNLANNTILVKWLPQNDLLGHPMTRAFITHAGSHGVYESICNGVPMVMMPLFGDQMDNAKRMETKGAGVTLNVLEMTSEDLENALKAVINDKSYKENIMRLSSLHKDRPVEPLDLAVFWVEFVMRHKGAPHLRPAAHDLTWYQYHSLDVIGFLLAVVLTVAFITFKCCAYGYRKCLGKKGRVKKAHKSKTH</sequence>
<accession>P35503</accession>
<accession>B8K287</accession>
<gene>
    <name evidence="29" type="primary">UGT1A3</name>
    <name type="synonym">GNT1</name>
    <name type="synonym">UGT1</name>
</gene>
<keyword id="KW-0025">Alternative splicing</keyword>
<keyword id="KW-0256">Endoplasmic reticulum</keyword>
<keyword id="KW-0325">Glycoprotein</keyword>
<keyword id="KW-0328">Glycosyltransferase</keyword>
<keyword id="KW-0443">Lipid metabolism</keyword>
<keyword id="KW-0472">Membrane</keyword>
<keyword id="KW-1267">Proteomics identification</keyword>
<keyword id="KW-1185">Reference proteome</keyword>
<keyword id="KW-0732">Signal</keyword>
<keyword id="KW-0808">Transferase</keyword>
<keyword id="KW-0812">Transmembrane</keyword>
<keyword id="KW-1133">Transmembrane helix</keyword>
<evidence type="ECO:0000255" key="1"/>
<evidence type="ECO:0000269" key="2">
    <source>
    </source>
</evidence>
<evidence type="ECO:0000269" key="3">
    <source>
    </source>
</evidence>
<evidence type="ECO:0000269" key="4">
    <source>
    </source>
</evidence>
<evidence type="ECO:0000269" key="5">
    <source>
    </source>
</evidence>
<evidence type="ECO:0000269" key="6">
    <source>
    </source>
</evidence>
<evidence type="ECO:0000269" key="7">
    <source>
    </source>
</evidence>
<evidence type="ECO:0000269" key="8">
    <source>
    </source>
</evidence>
<evidence type="ECO:0000269" key="9">
    <source>
    </source>
</evidence>
<evidence type="ECO:0000269" key="10">
    <source>
    </source>
</evidence>
<evidence type="ECO:0000269" key="11">
    <source>
    </source>
</evidence>
<evidence type="ECO:0000269" key="12">
    <source>
    </source>
</evidence>
<evidence type="ECO:0000269" key="13">
    <source>
    </source>
</evidence>
<evidence type="ECO:0000303" key="14">
    <source>
    </source>
</evidence>
<evidence type="ECO:0000303" key="15">
    <source>
    </source>
</evidence>
<evidence type="ECO:0000303" key="16">
    <source>
    </source>
</evidence>
<evidence type="ECO:0000303" key="17">
    <source>
    </source>
</evidence>
<evidence type="ECO:0000305" key="18"/>
<evidence type="ECO:0000305" key="19">
    <source>
    </source>
</evidence>
<evidence type="ECO:0000305" key="20">
    <source>
    </source>
</evidence>
<evidence type="ECO:0000305" key="21">
    <source>
    </source>
</evidence>
<evidence type="ECO:0000305" key="22">
    <source>
    </source>
</evidence>
<evidence type="ECO:0000305" key="23">
    <source>
    </source>
</evidence>
<evidence type="ECO:0000305" key="24">
    <source>
    </source>
</evidence>
<evidence type="ECO:0000305" key="25">
    <source>
    </source>
</evidence>
<evidence type="ECO:0000305" key="26">
    <source>
    </source>
</evidence>
<evidence type="ECO:0000305" key="27">
    <source>
    </source>
</evidence>
<evidence type="ECO:0000305" key="28">
    <source>
    </source>
</evidence>
<evidence type="ECO:0000312" key="29">
    <source>
        <dbReference type="HGNC" id="HGNC:12535"/>
    </source>
</evidence>
<name>UD13_HUMAN</name>
<reference key="1">
    <citation type="journal article" date="1992" name="J. Biol. Chem.">
        <title>A novel complex locus UGT1 encodes human bilirubin, phenol, and other UDP-glucuronosyltransferase isozymes with identical carboxyl termini.</title>
        <authorList>
            <person name="Ritter J.K."/>
            <person name="Chen F."/>
            <person name="Sheen Y.Y."/>
            <person name="Tran H.M."/>
            <person name="Kimura S."/>
            <person name="Yeatman M.T."/>
            <person name="Owens I.S."/>
        </authorList>
    </citation>
    <scope>NUCLEOTIDE SEQUENCE [GENOMIC DNA]</scope>
</reference>
<reference key="2">
    <citation type="journal article" date="2001" name="Pharmacogenetics">
        <title>Thirteen UDP-glucuronosyltransferase genes are encoded at the human UGT1 gene complex locus.</title>
        <authorList>
            <person name="Gong Q.H."/>
            <person name="Cho J.W."/>
            <person name="Huang T."/>
            <person name="Potter C."/>
            <person name="Gholami N."/>
            <person name="Basu N.K."/>
            <person name="Kubota S."/>
            <person name="Carvalho S."/>
            <person name="Pennington M.W."/>
            <person name="Owens I.S."/>
            <person name="Popescu N.C."/>
        </authorList>
    </citation>
    <scope>NUCLEOTIDE SEQUENCE [GENOMIC DNA]</scope>
</reference>
<reference key="3">
    <citation type="journal article" date="2005" name="Nature">
        <title>Generation and annotation of the DNA sequences of human chromosomes 2 and 4.</title>
        <authorList>
            <person name="Hillier L.W."/>
            <person name="Graves T.A."/>
            <person name="Fulton R.S."/>
            <person name="Fulton L.A."/>
            <person name="Pepin K.H."/>
            <person name="Minx P."/>
            <person name="Wagner-McPherson C."/>
            <person name="Layman D."/>
            <person name="Wylie K."/>
            <person name="Sekhon M."/>
            <person name="Becker M.C."/>
            <person name="Fewell G.A."/>
            <person name="Delehaunty K.D."/>
            <person name="Miner T.L."/>
            <person name="Nash W.E."/>
            <person name="Kremitzki C."/>
            <person name="Oddy L."/>
            <person name="Du H."/>
            <person name="Sun H."/>
            <person name="Bradshaw-Cordum H."/>
            <person name="Ali J."/>
            <person name="Carter J."/>
            <person name="Cordes M."/>
            <person name="Harris A."/>
            <person name="Isak A."/>
            <person name="van Brunt A."/>
            <person name="Nguyen C."/>
            <person name="Du F."/>
            <person name="Courtney L."/>
            <person name="Kalicki J."/>
            <person name="Ozersky P."/>
            <person name="Abbott S."/>
            <person name="Armstrong J."/>
            <person name="Belter E.A."/>
            <person name="Caruso L."/>
            <person name="Cedroni M."/>
            <person name="Cotton M."/>
            <person name="Davidson T."/>
            <person name="Desai A."/>
            <person name="Elliott G."/>
            <person name="Erb T."/>
            <person name="Fronick C."/>
            <person name="Gaige T."/>
            <person name="Haakenson W."/>
            <person name="Haglund K."/>
            <person name="Holmes A."/>
            <person name="Harkins R."/>
            <person name="Kim K."/>
            <person name="Kruchowski S.S."/>
            <person name="Strong C.M."/>
            <person name="Grewal N."/>
            <person name="Goyea E."/>
            <person name="Hou S."/>
            <person name="Levy A."/>
            <person name="Martinka S."/>
            <person name="Mead K."/>
            <person name="McLellan M.D."/>
            <person name="Meyer R."/>
            <person name="Randall-Maher J."/>
            <person name="Tomlinson C."/>
            <person name="Dauphin-Kohlberg S."/>
            <person name="Kozlowicz-Reilly A."/>
            <person name="Shah N."/>
            <person name="Swearengen-Shahid S."/>
            <person name="Snider J."/>
            <person name="Strong J.T."/>
            <person name="Thompson J."/>
            <person name="Yoakum M."/>
            <person name="Leonard S."/>
            <person name="Pearman C."/>
            <person name="Trani L."/>
            <person name="Radionenko M."/>
            <person name="Waligorski J.E."/>
            <person name="Wang C."/>
            <person name="Rock S.M."/>
            <person name="Tin-Wollam A.-M."/>
            <person name="Maupin R."/>
            <person name="Latreille P."/>
            <person name="Wendl M.C."/>
            <person name="Yang S.-P."/>
            <person name="Pohl C."/>
            <person name="Wallis J.W."/>
            <person name="Spieth J."/>
            <person name="Bieri T.A."/>
            <person name="Berkowicz N."/>
            <person name="Nelson J.O."/>
            <person name="Osborne J."/>
            <person name="Ding L."/>
            <person name="Meyer R."/>
            <person name="Sabo A."/>
            <person name="Shotland Y."/>
            <person name="Sinha P."/>
            <person name="Wohldmann P.E."/>
            <person name="Cook L.L."/>
            <person name="Hickenbotham M.T."/>
            <person name="Eldred J."/>
            <person name="Williams D."/>
            <person name="Jones T.A."/>
            <person name="She X."/>
            <person name="Ciccarelli F.D."/>
            <person name="Izaurralde E."/>
            <person name="Taylor J."/>
            <person name="Schmutz J."/>
            <person name="Myers R.M."/>
            <person name="Cox D.R."/>
            <person name="Huang X."/>
            <person name="McPherson J.D."/>
            <person name="Mardis E.R."/>
            <person name="Clifton S.W."/>
            <person name="Warren W.C."/>
            <person name="Chinwalla A.T."/>
            <person name="Eddy S.R."/>
            <person name="Marra M.A."/>
            <person name="Ovcharenko I."/>
            <person name="Furey T.S."/>
            <person name="Miller W."/>
            <person name="Eichler E.E."/>
            <person name="Bork P."/>
            <person name="Suyama M."/>
            <person name="Torrents D."/>
            <person name="Waterston R.H."/>
            <person name="Wilson R.K."/>
        </authorList>
    </citation>
    <scope>NUCLEOTIDE SEQUENCE [LARGE SCALE GENOMIC DNA]</scope>
</reference>
<reference key="4">
    <citation type="submission" date="2006-01" db="EMBL/GenBank/DDBJ databases">
        <authorList>
            <person name="Guillemette C."/>
            <person name="Levesque E."/>
            <person name="Girard H."/>
            <person name="Bernard O."/>
        </authorList>
    </citation>
    <scope>PARTIAL NUCLEOTIDE SEQUENCE [MRNA] (ISOFORM 2)</scope>
</reference>
<reference key="5">
    <citation type="journal article" date="2004" name="J. Clin. Endocrinol. Metab.">
        <title>Specificity and regioselectivity of the conjugation of estradiol, estrone, and their catecholestrogen and methoxyestrogen metabolites by human uridine diphospho-glucuronosyltransferases expressed in endometrium.</title>
        <authorList>
            <person name="Lepine J."/>
            <person name="Bernard O."/>
            <person name="Plante M."/>
            <person name="Tetu B."/>
            <person name="Pelletier G."/>
            <person name="Labrie F."/>
            <person name="Belanger A."/>
            <person name="Guillemette C."/>
        </authorList>
    </citation>
    <scope>CATALYTIC ACTIVITY</scope>
    <scope>BIOPHYSICOCHEMICAL PROPERTIES</scope>
    <scope>FUNCTION</scope>
</reference>
<reference key="6">
    <citation type="journal article" date="2007" name="Pharmacogenet. Genomics">
        <title>Genetic diversity at the UGT1 locus is amplified by a novel 3' alternative splicing mechanism leading to nine additional UGT1A proteins that act as regulators of glucuronidation activity.</title>
        <authorList>
            <person name="Girard H."/>
            <person name="Levesque E."/>
            <person name="Bellemare J."/>
            <person name="Journault K."/>
            <person name="Caillier B."/>
            <person name="Guillemette C."/>
        </authorList>
    </citation>
    <scope>FUNCTION (ISOFORM 2)</scope>
    <scope>CATALYTIC ACTIVITY</scope>
    <scope>ALTERNATIVE SPLICING</scope>
    <scope>TISSUE SPECIFICITY</scope>
</reference>
<reference key="7">
    <citation type="journal article" date="2007" name="J. Biol. Chem.">
        <title>Oligomerization of the UDP-glucuronosyltransferase 1A proteins: homo- and heterodimerization analysis by fluorescence resonance energy transfer and co-immunoprecipitation.</title>
        <authorList>
            <person name="Operana T.N."/>
            <person name="Tukey R.H."/>
        </authorList>
    </citation>
    <scope>SUBUNIT</scope>
    <scope>SUBCELLULAR LOCATION</scope>
</reference>
<reference key="8">
    <citation type="journal article" date="2008" name="Biochem. Pharmacol.">
        <title>The human UDP-glucuronosyltransferase UGT1A3 is highly selective towards N2 in the tetrazole ring of losartan, candesartan, and zolarsartan.</title>
        <authorList>
            <person name="Alonen A."/>
            <person name="Finel M."/>
            <person name="Kostiainen R."/>
        </authorList>
    </citation>
    <scope>FUNCTION (ISOFORM 1)</scope>
</reference>
<reference key="9">
    <citation type="journal article" date="2008" name="Drug Metab. Dispos.">
        <title>The configuration of the 17-hydroxy group variably influences the glucuronidation of beta-estradiol and epiestradiol by human UDP-glucuronosyltransferases.</title>
        <authorList>
            <person name="Itaeaho K."/>
            <person name="Mackenzie P.I."/>
            <person name="Ikushiro S."/>
            <person name="Miners J.O."/>
            <person name="Finel M."/>
        </authorList>
    </citation>
    <scope>FUNCTION (ISOFORM 1)</scope>
    <scope>CATALYTIC ACTIVITY</scope>
    <scope>BIOPHYSICOCHEMICAL PROPERTIES</scope>
    <scope>SUBSTRATE SPECIFICITY</scope>
</reference>
<reference key="10">
    <citation type="journal article" date="2009" name="J. Proteome Res.">
        <title>Glycoproteomics analysis of human liver tissue by combination of multiple enzyme digestion and hydrazide chemistry.</title>
        <authorList>
            <person name="Chen R."/>
            <person name="Jiang X."/>
            <person name="Sun D."/>
            <person name="Han G."/>
            <person name="Wang F."/>
            <person name="Ye M."/>
            <person name="Wang L."/>
            <person name="Zou H."/>
        </authorList>
    </citation>
    <scope>GLYCOSYLATION [LARGE SCALE ANALYSIS] AT ASN-142</scope>
    <source>
        <tissue>Liver</tissue>
    </source>
</reference>
<reference key="11">
    <citation type="journal article" date="2010" name="Drug Metab. Dispos.">
        <title>Alternatively spliced products of the UGT1A gene interact with the enzymatically active proteins to inhibit glucuronosyltransferase activity in vitro.</title>
        <authorList>
            <person name="Bellemare J."/>
            <person name="Rouleau M."/>
            <person name="Girard H."/>
            <person name="Harvey M."/>
            <person name="Guillemette C."/>
        </authorList>
    </citation>
    <scope>FUNCTION (ISOFORM 2)</scope>
    <scope>SUBUNIT</scope>
</reference>
<reference key="12">
    <citation type="journal article" date="2011" name="Drug Metab. Pharmacokinet.">
        <title>Identification of the human UDP-glucuronosyltransferase isoforms involved in the glucuronidation of the phytochemical ferulic acid.</title>
        <authorList>
            <person name="Li X."/>
            <person name="Shang L."/>
            <person name="Wu Y."/>
            <person name="Abbas S."/>
            <person name="Li D."/>
            <person name="Netter P."/>
            <person name="Ouzzine M."/>
            <person name="Wang H."/>
            <person name="Magdalou J."/>
        </authorList>
    </citation>
    <scope>FUNCTION</scope>
    <scope>CATALYTIC ACTIVITY</scope>
    <scope>BIOPHYSICOCHEMICAL PROPERTIES</scope>
</reference>
<reference key="13">
    <citation type="journal article" date="2013" name="Drug Metab. Dispos.">
        <title>The Human UDP-glucuronosyltransferase UGT2A1 and UGT2A2 enzymes are highly active in bile acid glucuronidation.</title>
        <authorList>
            <person name="Perreault M."/>
            <person name="Gauthier-Landry L."/>
            <person name="Trottier J."/>
            <person name="Verreault M."/>
            <person name="Caron P."/>
            <person name="Finel M."/>
            <person name="Barbier O."/>
        </authorList>
    </citation>
    <scope>FUNCTION (ISOFORM 1)</scope>
    <scope>CATALYTIC ACTIVITY</scope>
</reference>
<reference key="14">
    <citation type="journal article" date="2013" name="Drug Metab. Dispos.">
        <title>Regiospecificity and stereospecificity of human UDP-glucuronosyltransferases in the glucuronidation of estriol, 16-epiestriol, 17-epiestriol, and 13-epiestradiol.</title>
        <authorList>
            <person name="Sneitz N."/>
            <person name="Vahermo M."/>
            <person name="Mosorin J."/>
            <person name="Laakkonen L."/>
            <person name="Poirier D."/>
            <person name="Finel M."/>
        </authorList>
    </citation>
    <scope>FUNCTION (ISOFORM 1)</scope>
    <scope>CATALYTIC ACTIVITY</scope>
</reference>
<reference key="15">
    <citation type="journal article" date="2014" name="Endocrinology">
        <title>Human UGT1A4 and UGT1A3 conjugate 25-hydroxyvitamin D3: metabolite structure, kinetics, inducibility, and interindividual variability.</title>
        <authorList>
            <person name="Wang Z."/>
            <person name="Wong T."/>
            <person name="Hashizume T."/>
            <person name="Dickmann L.Z."/>
            <person name="Scian M."/>
            <person name="Koszewski N.J."/>
            <person name="Goff J.P."/>
            <person name="Horst R.L."/>
            <person name="Chaudhry A.S."/>
            <person name="Schuetz E.G."/>
            <person name="Thummel K.E."/>
        </authorList>
    </citation>
    <scope>FUNCTION (ISOFORM 1)</scope>
    <scope>CATALYTIC ACTIVITY</scope>
    <scope>BIOPHYSICOCHEMICAL PROPERTIES</scope>
</reference>
<reference key="16">
    <citation type="journal article" date="2009" name="Hum. Mutat.">
        <title>Analysis of inherited genetic variations at the UGT1 locus in the French-Canadian population.</title>
        <authorList>
            <person name="Menard V."/>
            <person name="Girard H."/>
            <person name="Harvey M."/>
            <person name="Perusse L."/>
            <person name="Guillemette C."/>
        </authorList>
    </citation>
    <scope>VARIANTS ARG-11; ALA-47; VAL-158 AND VAL-270</scope>
</reference>
<feature type="signal peptide" evidence="1">
    <location>
        <begin position="1"/>
        <end position="28"/>
    </location>
</feature>
<feature type="chain" id="PRO_0000036002" description="UDP-glucuronosyltransferase 1A3">
    <location>
        <begin position="29"/>
        <end position="534"/>
    </location>
</feature>
<feature type="transmembrane region" description="Helical" evidence="1">
    <location>
        <begin position="492"/>
        <end position="508"/>
    </location>
</feature>
<feature type="glycosylation site" description="N-linked (GlcNAc...) asparagine" evidence="1">
    <location>
        <position position="119"/>
    </location>
</feature>
<feature type="glycosylation site" description="N-linked (GlcNAc...) asparagine" evidence="7">
    <location>
        <position position="142"/>
    </location>
</feature>
<feature type="glycosylation site" description="N-linked (GlcNAc...) asparagine" evidence="1">
    <location>
        <position position="296"/>
    </location>
</feature>
<feature type="glycosylation site" description="N-linked (GlcNAc...) asparagine" evidence="1">
    <location>
        <position position="348"/>
    </location>
</feature>
<feature type="splice variant" id="VSP_053959" description="In isoform 2." evidence="18">
    <original>SYKENIMRLSSLHKDRPVEPLDLAVFWVEFVMRHKGAPHLRPAAHDLTWYQYHSLDVIGFLLAVVLTVAFITFKCCAYGYRKCLGKKGRVKKAHKSKTH</original>
    <variation>RKKQQSGRQM</variation>
    <location>
        <begin position="436"/>
        <end position="534"/>
    </location>
</feature>
<feature type="sequence variant" id="VAR_052445" description="In dbSNP:rs28898617.">
    <original>Q</original>
    <variation>R</variation>
    <location>
        <position position="6"/>
    </location>
</feature>
<feature type="sequence variant" id="VAR_052446" description="In dbSNP:rs3821242." evidence="8">
    <original>W</original>
    <variation>R</variation>
    <location>
        <position position="11"/>
    </location>
</feature>
<feature type="sequence variant" id="VAR_052447" description="In dbSNP:rs45625338.">
    <original>R</original>
    <variation>W</variation>
    <location>
        <position position="45"/>
    </location>
</feature>
<feature type="sequence variant" id="VAR_052448" description="In dbSNP:rs6431625." evidence="8">
    <original>V</original>
    <variation>A</variation>
    <location>
        <position position="47"/>
    </location>
</feature>
<feature type="sequence variant" id="VAR_052449" description="In dbSNP:rs45595237.">
    <original>R</original>
    <variation>W</variation>
    <location>
        <position position="49"/>
    </location>
</feature>
<feature type="sequence variant" id="VAR_052450" description="In dbSNP:rs28898618.">
    <original>T</original>
    <variation>I</variation>
    <location>
        <position position="78"/>
    </location>
</feature>
<feature type="sequence variant" id="VAR_052451" description="In dbSNP:rs28898619.">
    <original>M</original>
    <variation>I</variation>
    <location>
        <position position="114"/>
    </location>
</feature>
<feature type="sequence variant" id="VAR_052452" description="In dbSNP:rs13406898.">
    <original>T</original>
    <variation>I</variation>
    <location>
        <position position="144"/>
    </location>
</feature>
<feature type="sequence variant" id="VAR_058583" description="In dbSNP:rs61764030." evidence="8">
    <original>A</original>
    <variation>V</variation>
    <location>
        <position position="158"/>
    </location>
</feature>
<feature type="sequence variant" id="VAR_052453" description="In dbSNP:rs45449995." evidence="8">
    <original>M</original>
    <variation>V</variation>
    <location>
        <position position="270"/>
    </location>
</feature>
<protein>
    <recommendedName>
        <fullName evidence="14 16">UDP-glucuronosyltransferase 1A3</fullName>
        <shortName evidence="17">UGT1A3</shortName>
        <ecNumber evidence="4 5 6 10 11 12 13">2.4.1.17</ecNumber>
    </recommendedName>
    <alternativeName>
        <fullName>UDP-glucuronosyltransferase 1-3</fullName>
        <shortName>UDPGT 1-3</shortName>
        <shortName>UGT1*3</shortName>
        <shortName>UGT1-03</shortName>
        <shortName>UGT1.3</shortName>
    </alternativeName>
    <alternativeName>
        <fullName>UDP-glucuronosyltransferase 1-C</fullName>
        <shortName>UGT-1C</shortName>
        <shortName>UGT1C</shortName>
    </alternativeName>
    <alternativeName>
        <fullName>UDP-glucuronosyltransferase 1A isoform 3</fullName>
    </alternativeName>
</protein>
<dbReference type="EC" id="2.4.1.17" evidence="4 5 6 10 11 12 13"/>
<dbReference type="EMBL" id="M84127">
    <property type="protein sequence ID" value="AAA92020.1"/>
    <property type="molecule type" value="Genomic_DNA"/>
</dbReference>
<dbReference type="EMBL" id="M84124">
    <property type="protein sequence ID" value="AAA61247.1"/>
    <property type="status" value="ALT_SEQ"/>
    <property type="molecule type" value="Genomic_DNA"/>
</dbReference>
<dbReference type="EMBL" id="M84122">
    <property type="protein sequence ID" value="AAA61247.1"/>
    <property type="status" value="JOINED"/>
    <property type="molecule type" value="Genomic_DNA"/>
</dbReference>
<dbReference type="EMBL" id="M84123">
    <property type="protein sequence ID" value="AAA61247.1"/>
    <property type="status" value="JOINED"/>
    <property type="molecule type" value="Genomic_DNA"/>
</dbReference>
<dbReference type="EMBL" id="AF297093">
    <property type="protein sequence ID" value="AAG30423.1"/>
    <property type="molecule type" value="Genomic_DNA"/>
</dbReference>
<dbReference type="EMBL" id="AC006985">
    <property type="status" value="NOT_ANNOTATED_CDS"/>
    <property type="molecule type" value="Genomic_DNA"/>
</dbReference>
<dbReference type="EMBL" id="AC114812">
    <property type="status" value="NOT_ANNOTATED_CDS"/>
    <property type="molecule type" value="Genomic_DNA"/>
</dbReference>
<dbReference type="EMBL" id="DQ364248">
    <property type="protein sequence ID" value="ABC96772.1"/>
    <property type="molecule type" value="mRNA"/>
</dbReference>
<dbReference type="CCDS" id="CCDS2509.1">
    <molecule id="P35503-1"/>
</dbReference>
<dbReference type="PIR" id="D42586">
    <property type="entry name" value="D42586"/>
</dbReference>
<dbReference type="RefSeq" id="NP_061966.1">
    <molecule id="P35503-1"/>
    <property type="nucleotide sequence ID" value="NM_019093.4"/>
</dbReference>
<dbReference type="SMR" id="P35503"/>
<dbReference type="BioGRID" id="120088">
    <property type="interactions" value="4"/>
</dbReference>
<dbReference type="FunCoup" id="P35503">
    <property type="interactions" value="331"/>
</dbReference>
<dbReference type="IntAct" id="P35503">
    <property type="interactions" value="10"/>
</dbReference>
<dbReference type="STRING" id="9606.ENSP00000418532"/>
<dbReference type="BindingDB" id="P35503"/>
<dbReference type="ChEMBL" id="CHEMBL3542435"/>
<dbReference type="DrugBank" id="DB06403">
    <property type="generic name" value="Ambrisentan"/>
</dbReference>
<dbReference type="DrugBank" id="DB01217">
    <property type="generic name" value="Anastrozole"/>
</dbReference>
<dbReference type="DrugBank" id="DB00714">
    <property type="generic name" value="Apomorphine"/>
</dbReference>
<dbReference type="DrugBank" id="DB01076">
    <property type="generic name" value="Atorvastatin"/>
</dbReference>
<dbReference type="DrugBank" id="DB13997">
    <property type="generic name" value="Baloxavir marboxil"/>
</dbReference>
<dbReference type="DrugBank" id="DB13919">
    <property type="generic name" value="Candesartan"/>
</dbReference>
<dbReference type="DrugBank" id="DB00796">
    <property type="generic name" value="Candesartan cilexetil"/>
</dbReference>
<dbReference type="DrugBank" id="DB14635">
    <property type="generic name" value="Curcumin sulfate"/>
</dbReference>
<dbReference type="DrugBank" id="DB00434">
    <property type="generic name" value="Cyproheptadine"/>
</dbReference>
<dbReference type="DrugBank" id="DB01609">
    <property type="generic name" value="Deferasirox"/>
</dbReference>
<dbReference type="DrugBank" id="DB11943">
    <property type="generic name" value="Delafloxacin"/>
</dbReference>
<dbReference type="DrugBank" id="DB06700">
    <property type="generic name" value="Desvenlafaxine"/>
</dbReference>
<dbReference type="DrugBank" id="DB09213">
    <property type="generic name" value="Dexibuprofen"/>
</dbReference>
<dbReference type="DrugBank" id="DB00586">
    <property type="generic name" value="Diclofenac"/>
</dbReference>
<dbReference type="DrugBank" id="DB08930">
    <property type="generic name" value="Dolutegravir"/>
</dbReference>
<dbReference type="DrugBank" id="DB05928">
    <property type="generic name" value="Dovitinib"/>
</dbReference>
<dbReference type="DrugBank" id="DB00470">
    <property type="generic name" value="Dronabinol"/>
</dbReference>
<dbReference type="DrugBank" id="DB05187">
    <property type="generic name" value="Elafibranor"/>
</dbReference>
<dbReference type="DrugBank" id="DB11979">
    <property type="generic name" value="Elagolix"/>
</dbReference>
<dbReference type="DrugBank" id="DB06210">
    <property type="generic name" value="Eltrombopag"/>
</dbReference>
<dbReference type="DrugBank" id="DB09038">
    <property type="generic name" value="Empagliflozin"/>
</dbReference>
<dbReference type="DrugBank" id="DB13874">
    <property type="generic name" value="Enasidenib"/>
</dbReference>
<dbReference type="DrugBank" id="DB00783">
    <property type="generic name" value="Estradiol"/>
</dbReference>
<dbReference type="DrugBank" id="DB00977">
    <property type="generic name" value="Ethinylestradiol"/>
</dbReference>
<dbReference type="DrugBank" id="DB00749">
    <property type="generic name" value="Etodolac"/>
</dbReference>
<dbReference type="DrugBank" id="DB00973">
    <property type="generic name" value="Ezetimibe"/>
</dbReference>
<dbReference type="DrugBank" id="DB04953">
    <property type="generic name" value="Ezogabine"/>
</dbReference>
<dbReference type="DrugBank" id="DB04854">
    <property type="generic name" value="Febuxostat"/>
</dbReference>
<dbReference type="DrugBank" id="DB01544">
    <property type="generic name" value="Flunitrazepam"/>
</dbReference>
<dbReference type="DrugBank" id="DB00712">
    <property type="generic name" value="Flurbiprofen"/>
</dbReference>
<dbReference type="DrugBank" id="DB01095">
    <property type="generic name" value="Fluvastatin"/>
</dbReference>
<dbReference type="DrugBank" id="DB11796">
    <property type="generic name" value="Fostemsavir"/>
</dbReference>
<dbReference type="DrugBank" id="DB06741">
    <property type="generic name" value="Gavestinel"/>
</dbReference>
<dbReference type="DrugBank" id="DB01241">
    <property type="generic name" value="Gemfibrozil"/>
</dbReference>
<dbReference type="DrugBank" id="DB00327">
    <property type="generic name" value="Hydromorphone"/>
</dbReference>
<dbReference type="DrugBank" id="DB12471">
    <property type="generic name" value="Ibrexafungerp"/>
</dbReference>
<dbReference type="DrugBank" id="DB01050">
    <property type="generic name" value="Ibuprofen"/>
</dbReference>
<dbReference type="DrugBank" id="DB16200">
    <property type="generic name" value="Iptacopan"/>
</dbReference>
<dbReference type="DrugBank" id="DB01029">
    <property type="generic name" value="Irbesartan"/>
</dbReference>
<dbReference type="DrugBank" id="DB00920">
    <property type="generic name" value="Ketotifen"/>
</dbReference>
<dbReference type="DrugBank" id="DB00555">
    <property type="generic name" value="Lamotrigine"/>
</dbReference>
<dbReference type="DrugBank" id="DB12070">
    <property type="generic name" value="Letermovir"/>
</dbReference>
<dbReference type="DrugBank" id="DB04725">
    <property type="generic name" value="Licofelone"/>
</dbReference>
<dbReference type="DrugBank" id="DB00455">
    <property type="generic name" value="Loratadine"/>
</dbReference>
<dbReference type="DrugBank" id="DB12130">
    <property type="generic name" value="Lorlatinib"/>
</dbReference>
<dbReference type="DrugBank" id="DB00678">
    <property type="generic name" value="Losartan"/>
</dbReference>
<dbReference type="DrugBank" id="DB00227">
    <property type="generic name" value="Lovastatin"/>
</dbReference>
<dbReference type="DrugBank" id="DB05018">
    <property type="generic name" value="Migalastat"/>
</dbReference>
<dbReference type="DrugBank" id="DB08893">
    <property type="generic name" value="Mirabegron"/>
</dbReference>
<dbReference type="DrugBank" id="DB01252">
    <property type="generic name" value="Mitiglinide"/>
</dbReference>
<dbReference type="DrugBank" id="DB00295">
    <property type="generic name" value="Morphine"/>
</dbReference>
<dbReference type="DrugBank" id="DB06510">
    <property type="generic name" value="Muraglitazar"/>
</dbReference>
<dbReference type="DrugBank" id="DB11691">
    <property type="generic name" value="Naldemedine"/>
</dbReference>
<dbReference type="DrugBank" id="DB06230">
    <property type="generic name" value="Nalmefene"/>
</dbReference>
<dbReference type="DrugBank" id="DB08804">
    <property type="generic name" value="Nandrolone decanoate"/>
</dbReference>
<dbReference type="DrugBank" id="DB00788">
    <property type="generic name" value="Naproxen"/>
</dbReference>
<dbReference type="DrugBank" id="DB00960">
    <property type="generic name" value="Pindolol"/>
</dbReference>
<dbReference type="DrugBank" id="DB08860">
    <property type="generic name" value="Pitavastatin"/>
</dbReference>
<dbReference type="DrugBank" id="DB00794">
    <property type="generic name" value="Primidone"/>
</dbReference>
<dbReference type="DrugBank" id="DB00503">
    <property type="generic name" value="Ritonavir"/>
</dbReference>
<dbReference type="DrugBank" id="DB11689">
    <property type="generic name" value="Selumetinib"/>
</dbReference>
<dbReference type="DrugBank" id="DB00641">
    <property type="generic name" value="Simvastatin"/>
</dbReference>
<dbReference type="DrugBank" id="DB12020">
    <property type="generic name" value="Tecovirimat"/>
</dbReference>
<dbReference type="DrugBank" id="DB00966">
    <property type="generic name" value="Telmisartan"/>
</dbReference>
<dbReference type="DrugBank" id="DB00871">
    <property type="generic name" value="Terbutaline"/>
</dbReference>
<dbReference type="DrugBank" id="DB00197">
    <property type="generic name" value="Troglitazone"/>
</dbReference>
<dbReference type="DrugBank" id="DB00313">
    <property type="generic name" value="Valproic acid"/>
</dbReference>
<dbReference type="DrugBank" id="DB15114">
    <property type="generic name" value="Vamorolone"/>
</dbReference>
<dbReference type="SwissLipids" id="SLP:000001698"/>
<dbReference type="CAZy" id="GT1">
    <property type="family name" value="Glycosyltransferase Family 1"/>
</dbReference>
<dbReference type="GlyConnect" id="1875">
    <property type="glycosylation" value="2 N-Linked glycans (1 site)"/>
</dbReference>
<dbReference type="GlyCosmos" id="P35503">
    <property type="glycosylation" value="4 sites, 2 glycans"/>
</dbReference>
<dbReference type="GlyGen" id="P35503">
    <property type="glycosylation" value="4 sites, 41 N-linked glycans (2 sites)"/>
</dbReference>
<dbReference type="iPTMnet" id="P35503"/>
<dbReference type="PhosphoSitePlus" id="P35503"/>
<dbReference type="SwissPalm" id="P35503"/>
<dbReference type="BioMuta" id="UGT1A3"/>
<dbReference type="jPOST" id="P35503"/>
<dbReference type="MassIVE" id="P35503"/>
<dbReference type="PaxDb" id="9606-ENSP00000418532"/>
<dbReference type="PeptideAtlas" id="P35503"/>
<dbReference type="ProteomicsDB" id="55072">
    <molecule id="P35503-1"/>
</dbReference>
<dbReference type="Antibodypedia" id="35062">
    <property type="antibodies" value="17 antibodies from 9 providers"/>
</dbReference>
<dbReference type="DNASU" id="54659"/>
<dbReference type="Ensembl" id="ENST00000482026.6">
    <molecule id="P35503-1"/>
    <property type="protein sequence ID" value="ENSP00000418532.1"/>
    <property type="gene ID" value="ENSG00000288702.1"/>
</dbReference>
<dbReference type="GeneID" id="54659"/>
<dbReference type="KEGG" id="hsa:54659"/>
<dbReference type="MANE-Select" id="ENST00000482026.6">
    <property type="protein sequence ID" value="ENSP00000418532.1"/>
    <property type="RefSeq nucleotide sequence ID" value="NM_019093.4"/>
    <property type="RefSeq protein sequence ID" value="NP_061966.1"/>
</dbReference>
<dbReference type="UCSC" id="uc061tvt.1">
    <molecule id="P35503-1"/>
    <property type="organism name" value="human"/>
</dbReference>
<dbReference type="AGR" id="HGNC:12535"/>
<dbReference type="CTD" id="54659"/>
<dbReference type="DisGeNET" id="54659"/>
<dbReference type="GeneCards" id="UGT1A3"/>
<dbReference type="HGNC" id="HGNC:12535">
    <property type="gene designation" value="UGT1A3"/>
</dbReference>
<dbReference type="HPA" id="ENSG00000288702">
    <property type="expression patterns" value="Tissue enriched (liver)"/>
</dbReference>
<dbReference type="MalaCards" id="UGT1A3"/>
<dbReference type="MIM" id="191740">
    <property type="type" value="gene"/>
</dbReference>
<dbReference type="MIM" id="606428">
    <property type="type" value="gene"/>
</dbReference>
<dbReference type="neXtProt" id="NX_P35503"/>
<dbReference type="PharmGKB" id="PA37178"/>
<dbReference type="VEuPathDB" id="HostDB:ENSG00000243135"/>
<dbReference type="eggNOG" id="KOG1192">
    <property type="taxonomic scope" value="Eukaryota"/>
</dbReference>
<dbReference type="GeneTree" id="ENSGT00940000162976"/>
<dbReference type="HOGENOM" id="CLU_012949_1_3_1"/>
<dbReference type="InParanoid" id="P35503"/>
<dbReference type="OMA" id="HICHISF"/>
<dbReference type="OrthoDB" id="9475613at2759"/>
<dbReference type="PAN-GO" id="P35503">
    <property type="GO annotations" value="3 GO annotations based on evolutionary models"/>
</dbReference>
<dbReference type="PhylomeDB" id="P35503"/>
<dbReference type="TreeFam" id="TF315472"/>
<dbReference type="BioCyc" id="MetaCyc:HS09519-MONOMER"/>
<dbReference type="BRENDA" id="2.4.1.17">
    <property type="organism ID" value="2681"/>
</dbReference>
<dbReference type="PathwayCommons" id="P35503"/>
<dbReference type="Reactome" id="R-HSA-156588">
    <property type="pathway name" value="Glucuronidation"/>
</dbReference>
<dbReference type="Reactome" id="R-HSA-9623433">
    <property type="pathway name" value="NR1H2 &amp; NR1H3 regulate gene expression to control bile acid homeostasis"/>
</dbReference>
<dbReference type="Reactome" id="R-HSA-9749641">
    <property type="pathway name" value="Aspirin ADME"/>
</dbReference>
<dbReference type="Reactome" id="R-HSA-9754706">
    <property type="pathway name" value="Atorvastatin ADME"/>
</dbReference>
<dbReference type="Reactome" id="R-HSA-9757110">
    <property type="pathway name" value="Prednisone ADME"/>
</dbReference>
<dbReference type="SABIO-RK" id="P35503"/>
<dbReference type="SignaLink" id="P35503"/>
<dbReference type="SIGNOR" id="P35503"/>
<dbReference type="BioGRID-ORCS" id="54659">
    <property type="hits" value="5 hits in 986 CRISPR screens"/>
</dbReference>
<dbReference type="GeneWiki" id="UGT1A3"/>
<dbReference type="GenomeRNAi" id="54659"/>
<dbReference type="Pharos" id="P35503">
    <property type="development level" value="Tbio"/>
</dbReference>
<dbReference type="PRO" id="PR:P35503"/>
<dbReference type="Proteomes" id="UP000005640">
    <property type="component" value="Chromosome 2"/>
</dbReference>
<dbReference type="RNAct" id="P35503">
    <property type="molecule type" value="protein"/>
</dbReference>
<dbReference type="GO" id="GO:0005783">
    <property type="term" value="C:endoplasmic reticulum"/>
    <property type="evidence" value="ECO:0000314"/>
    <property type="project" value="UniProtKB"/>
</dbReference>
<dbReference type="GO" id="GO:0005789">
    <property type="term" value="C:endoplasmic reticulum membrane"/>
    <property type="evidence" value="ECO:0000304"/>
    <property type="project" value="Reactome"/>
</dbReference>
<dbReference type="GO" id="GO:0019899">
    <property type="term" value="F:enzyme binding"/>
    <property type="evidence" value="ECO:0000353"/>
    <property type="project" value="BHF-UCL"/>
</dbReference>
<dbReference type="GO" id="GO:0004857">
    <property type="term" value="F:enzyme inhibitor activity"/>
    <property type="evidence" value="ECO:0000250"/>
    <property type="project" value="BHF-UCL"/>
</dbReference>
<dbReference type="GO" id="GO:0015020">
    <property type="term" value="F:glucuronosyltransferase activity"/>
    <property type="evidence" value="ECO:0000314"/>
    <property type="project" value="UniProtKB"/>
</dbReference>
<dbReference type="GO" id="GO:0046982">
    <property type="term" value="F:protein heterodimerization activity"/>
    <property type="evidence" value="ECO:0000353"/>
    <property type="project" value="BHF-UCL"/>
</dbReference>
<dbReference type="GO" id="GO:0042803">
    <property type="term" value="F:protein homodimerization activity"/>
    <property type="evidence" value="ECO:0000314"/>
    <property type="project" value="UniProtKB"/>
</dbReference>
<dbReference type="GO" id="GO:0001972">
    <property type="term" value="F:retinoic acid binding"/>
    <property type="evidence" value="ECO:0000314"/>
    <property type="project" value="BHF-UCL"/>
</dbReference>
<dbReference type="GO" id="GO:0032782">
    <property type="term" value="P:bile acid secretion"/>
    <property type="evidence" value="ECO:0000314"/>
    <property type="project" value="UniProtKB"/>
</dbReference>
<dbReference type="GO" id="GO:0008210">
    <property type="term" value="P:estrogen metabolic process"/>
    <property type="evidence" value="ECO:0000314"/>
    <property type="project" value="UniProtKB"/>
</dbReference>
<dbReference type="GO" id="GO:0009812">
    <property type="term" value="P:flavonoid metabolic process"/>
    <property type="evidence" value="ECO:0000314"/>
    <property type="project" value="BHF-UCL"/>
</dbReference>
<dbReference type="GO" id="GO:0045922">
    <property type="term" value="P:negative regulation of fatty acid metabolic process"/>
    <property type="evidence" value="ECO:0000250"/>
    <property type="project" value="BHF-UCL"/>
</dbReference>
<dbReference type="GO" id="GO:0042573">
    <property type="term" value="P:retinoic acid metabolic process"/>
    <property type="evidence" value="ECO:0000305"/>
    <property type="project" value="BHF-UCL"/>
</dbReference>
<dbReference type="GO" id="GO:0070640">
    <property type="term" value="P:vitamin D3 metabolic process"/>
    <property type="evidence" value="ECO:0000314"/>
    <property type="project" value="UniProtKB"/>
</dbReference>
<dbReference type="GO" id="GO:0006805">
    <property type="term" value="P:xenobiotic metabolic process"/>
    <property type="evidence" value="ECO:0000314"/>
    <property type="project" value="BHF-UCL"/>
</dbReference>
<dbReference type="CDD" id="cd03784">
    <property type="entry name" value="GT1_Gtf-like"/>
    <property type="match status" value="1"/>
</dbReference>
<dbReference type="FunFam" id="3.40.50.2000:FF:000001">
    <property type="entry name" value="UDP-glucuronosyltransferase"/>
    <property type="match status" value="1"/>
</dbReference>
<dbReference type="FunFam" id="3.40.50.2000:FF:000066">
    <property type="entry name" value="UDP-glucuronosyltransferase 1-1"/>
    <property type="match status" value="1"/>
</dbReference>
<dbReference type="Gene3D" id="3.40.50.2000">
    <property type="entry name" value="Glycogen Phosphorylase B"/>
    <property type="match status" value="2"/>
</dbReference>
<dbReference type="InterPro" id="IPR050271">
    <property type="entry name" value="UDP-glycosyltransferase"/>
</dbReference>
<dbReference type="InterPro" id="IPR002213">
    <property type="entry name" value="UDP_glucos_trans"/>
</dbReference>
<dbReference type="InterPro" id="IPR035595">
    <property type="entry name" value="UDP_glycos_trans_CS"/>
</dbReference>
<dbReference type="PANTHER" id="PTHR48043">
    <property type="entry name" value="EG:EG0003.4 PROTEIN-RELATED"/>
    <property type="match status" value="1"/>
</dbReference>
<dbReference type="PANTHER" id="PTHR48043:SF161">
    <property type="entry name" value="UDP GLUCURONOSYLTRANSFERASE FAMILY 1 MEMBER A1"/>
    <property type="match status" value="1"/>
</dbReference>
<dbReference type="Pfam" id="PF00201">
    <property type="entry name" value="UDPGT"/>
    <property type="match status" value="1"/>
</dbReference>
<dbReference type="SUPFAM" id="SSF53756">
    <property type="entry name" value="UDP-Glycosyltransferase/glycogen phosphorylase"/>
    <property type="match status" value="1"/>
</dbReference>
<dbReference type="PROSITE" id="PS00375">
    <property type="entry name" value="UDPGT"/>
    <property type="match status" value="1"/>
</dbReference>
<comment type="function">
    <molecule>Isoform 1</molecule>
    <text evidence="2 5 6 10 11 12 13">UDP-glucuronosyltransferase (UGT) that catalyzes phase II biotransformation reactions in which lipophilic substrates are conjugated with glucuronic acid to increase the metabolite's water solubility, thereby facilitating excretion into either the urine or bile (PubMed:15472229, PubMed:18674515, PubMed:18719240, PubMed:23288867, PubMed:23756265, PubMed:24641623, PubMed:21422672). Essential for the elimination and detoxification of drugs, xenobiotics and endogenous compounds (PubMed:23756265). Catalyzes the glucuronidation of endogenous estrogen hormones such as estradiol and estrone (PubMed:15472229, PubMed:18719240, PubMed:23288867). Contributes to bile acid (BA) detoxification by catalyzing the glucuronidation of BA substrates, which are natural detergents for dietary lipids absorption (PubMed:23756265). Involved in the glucuronidation of calcidiol, which is the major circulating form of vitamin D3, essential for the regulation of calcium and phosphate homeostasis (PubMed:24641623). Involved in the glucuronidation of the phytochemical ferulic acid at the phenolic or the carboxylic acid group (PubMed:21422672). Involved in the glucuronidation of the AGTR1 angiotensin receptor antagonists losartan, candesartan and zolarsartan, which can inhibit the effect of angiotensin II (PubMed:18674515).</text>
</comment>
<comment type="function">
    <molecule>Isoform 2</molecule>
    <text evidence="4 9">Lacks UDP-glucuronosyltransferase (UGT) activity but acts as a negative regulator of isoform 1.</text>
</comment>
<comment type="catalytic activity">
    <reaction evidence="4 5 6 10 11 12 13">
        <text>glucuronate acceptor + UDP-alpha-D-glucuronate = acceptor beta-D-glucuronoside + UDP + H(+)</text>
        <dbReference type="Rhea" id="RHEA:21032"/>
        <dbReference type="ChEBI" id="CHEBI:15378"/>
        <dbReference type="ChEBI" id="CHEBI:58052"/>
        <dbReference type="ChEBI" id="CHEBI:58223"/>
        <dbReference type="ChEBI" id="CHEBI:132367"/>
        <dbReference type="ChEBI" id="CHEBI:132368"/>
        <dbReference type="EC" id="2.4.1.17"/>
    </reaction>
    <physiologicalReaction direction="left-to-right" evidence="21 22 23 25 26 28">
        <dbReference type="Rhea" id="RHEA:21033"/>
    </physiologicalReaction>
</comment>
<comment type="catalytic activity">
    <reaction evidence="2 6 11">
        <text>17beta-estradiol + UDP-alpha-D-glucuronate = 17beta-estradiol 3-O-(beta-D-glucuronate) + UDP + H(+)</text>
        <dbReference type="Rhea" id="RHEA:52460"/>
        <dbReference type="ChEBI" id="CHEBI:15378"/>
        <dbReference type="ChEBI" id="CHEBI:16469"/>
        <dbReference type="ChEBI" id="CHEBI:58052"/>
        <dbReference type="ChEBI" id="CHEBI:58223"/>
        <dbReference type="ChEBI" id="CHEBI:136641"/>
    </reaction>
    <physiologicalReaction direction="left-to-right" evidence="19 23 26">
        <dbReference type="Rhea" id="RHEA:52461"/>
    </physiologicalReaction>
</comment>
<comment type="catalytic activity">
    <reaction evidence="2 6 11">
        <text>17beta-estradiol + UDP-alpha-D-glucuronate = 17beta-estradiol 17-O-(beta-D-glucuronate) + UDP + H(+)</text>
        <dbReference type="Rhea" id="RHEA:52464"/>
        <dbReference type="ChEBI" id="CHEBI:15378"/>
        <dbReference type="ChEBI" id="CHEBI:16469"/>
        <dbReference type="ChEBI" id="CHEBI:58052"/>
        <dbReference type="ChEBI" id="CHEBI:58223"/>
        <dbReference type="ChEBI" id="CHEBI:82961"/>
    </reaction>
    <physiologicalReaction direction="left-to-right" evidence="19 23 26">
        <dbReference type="Rhea" id="RHEA:52465"/>
    </physiologicalReaction>
</comment>
<comment type="catalytic activity">
    <reaction evidence="6 11">
        <text>17alpha-estradiol + UDP-alpha-D-glucuronate = 17alpha-estradiol 3-O-(beta-D-glucuronate) + UDP + H(+)</text>
        <dbReference type="Rhea" id="RHEA:52868"/>
        <dbReference type="ChEBI" id="CHEBI:15378"/>
        <dbReference type="ChEBI" id="CHEBI:17160"/>
        <dbReference type="ChEBI" id="CHEBI:57529"/>
        <dbReference type="ChEBI" id="CHEBI:58052"/>
        <dbReference type="ChEBI" id="CHEBI:58223"/>
    </reaction>
    <physiologicalReaction direction="left-to-right" evidence="23 26">
        <dbReference type="Rhea" id="RHEA:52869"/>
    </physiologicalReaction>
</comment>
<comment type="catalytic activity">
    <reaction evidence="2">
        <text>estrone + UDP-alpha-D-glucuronate = estrone 3-O-(beta-D-glucuronate) + UDP + H(+)</text>
        <dbReference type="Rhea" id="RHEA:52476"/>
        <dbReference type="ChEBI" id="CHEBI:15378"/>
        <dbReference type="ChEBI" id="CHEBI:17263"/>
        <dbReference type="ChEBI" id="CHEBI:58052"/>
        <dbReference type="ChEBI" id="CHEBI:58223"/>
        <dbReference type="ChEBI" id="CHEBI:136634"/>
    </reaction>
    <physiologicalReaction direction="left-to-right" evidence="19">
        <dbReference type="Rhea" id="RHEA:52477"/>
    </physiologicalReaction>
</comment>
<comment type="catalytic activity">
    <reaction evidence="12">
        <text>chenodeoxycholate + UDP-alpha-D-glucuronate = chenodeoxycholoyl-24-O-(beta-D-glucuronate) + UDP</text>
        <dbReference type="Rhea" id="RHEA:52940"/>
        <dbReference type="ChEBI" id="CHEBI:36234"/>
        <dbReference type="ChEBI" id="CHEBI:58052"/>
        <dbReference type="ChEBI" id="CHEBI:58223"/>
        <dbReference type="ChEBI" id="CHEBI:136899"/>
    </reaction>
    <physiologicalReaction direction="left-to-right" evidence="27">
        <dbReference type="Rhea" id="RHEA:52941"/>
    </physiologicalReaction>
</comment>
<comment type="catalytic activity">
    <reaction evidence="12">
        <text>deoxycholate + UDP-alpha-D-glucuronate = deoxycholoyl-24-O-(beta-D-glucuronate) + UDP</text>
        <dbReference type="Rhea" id="RHEA:52948"/>
        <dbReference type="ChEBI" id="CHEBI:23614"/>
        <dbReference type="ChEBI" id="CHEBI:58052"/>
        <dbReference type="ChEBI" id="CHEBI:58223"/>
        <dbReference type="ChEBI" id="CHEBI:136901"/>
    </reaction>
    <physiologicalReaction direction="left-to-right" evidence="27">
        <dbReference type="Rhea" id="RHEA:52949"/>
    </physiologicalReaction>
</comment>
<comment type="catalytic activity">
    <reaction evidence="12">
        <text>lithocholate + UDP-alpha-D-glucuronate = lithocholoyl-24-O-(beta-D-glucuronate) + UDP</text>
        <dbReference type="Rhea" id="RHEA:52952"/>
        <dbReference type="ChEBI" id="CHEBI:29744"/>
        <dbReference type="ChEBI" id="CHEBI:58052"/>
        <dbReference type="ChEBI" id="CHEBI:58223"/>
        <dbReference type="ChEBI" id="CHEBI:136902"/>
    </reaction>
    <physiologicalReaction direction="left-to-right" evidence="27">
        <dbReference type="Rhea" id="RHEA:52953"/>
    </physiologicalReaction>
</comment>
<comment type="catalytic activity">
    <reaction evidence="12">
        <text>hyodeoxycholate + UDP-alpha-D-glucuronate = hyodeoxycholoyl-24-O-(beta-D-glucuronate) + UDP</text>
        <dbReference type="Rhea" id="RHEA:52956"/>
        <dbReference type="ChEBI" id="CHEBI:58052"/>
        <dbReference type="ChEBI" id="CHEBI:58223"/>
        <dbReference type="ChEBI" id="CHEBI:58875"/>
        <dbReference type="ChEBI" id="CHEBI:136903"/>
    </reaction>
    <physiologicalReaction direction="left-to-right" evidence="27">
        <dbReference type="Rhea" id="RHEA:52957"/>
    </physiologicalReaction>
</comment>
<comment type="catalytic activity">
    <reaction evidence="12">
        <text>hyocholate + UDP-alpha-D-glucuronate = hyocholoyl-24-O-(beta-D-glucuronate) + UDP</text>
        <dbReference type="Rhea" id="RHEA:52960"/>
        <dbReference type="ChEBI" id="CHEBI:58052"/>
        <dbReference type="ChEBI" id="CHEBI:58223"/>
        <dbReference type="ChEBI" id="CHEBI:133661"/>
        <dbReference type="ChEBI" id="CHEBI:136904"/>
    </reaction>
    <physiologicalReaction direction="left-to-right" evidence="27">
        <dbReference type="Rhea" id="RHEA:52961"/>
    </physiologicalReaction>
</comment>
<comment type="catalytic activity">
    <reaction evidence="13">
        <text>calcidiol + UDP-alpha-D-glucuronate = calcidiol 25-O-(beta-D-glucuronide) + UDP + H(+)</text>
        <dbReference type="Rhea" id="RHEA:55840"/>
        <dbReference type="ChEBI" id="CHEBI:15378"/>
        <dbReference type="ChEBI" id="CHEBI:17933"/>
        <dbReference type="ChEBI" id="CHEBI:58052"/>
        <dbReference type="ChEBI" id="CHEBI:58223"/>
        <dbReference type="ChEBI" id="CHEBI:139277"/>
    </reaction>
    <physiologicalReaction direction="left-to-right" evidence="28">
        <dbReference type="Rhea" id="RHEA:55841"/>
    </physiologicalReaction>
</comment>
<comment type="catalytic activity">
    <reaction evidence="10">
        <text>(E)-ferulate + UDP-alpha-D-glucuronate = (E)-4-O-(beta-D-glucuronosyl)-ferulate + UDP + H(+)</text>
        <dbReference type="Rhea" id="RHEA:79951"/>
        <dbReference type="ChEBI" id="CHEBI:15378"/>
        <dbReference type="ChEBI" id="CHEBI:29749"/>
        <dbReference type="ChEBI" id="CHEBI:58052"/>
        <dbReference type="ChEBI" id="CHEBI:58223"/>
        <dbReference type="ChEBI" id="CHEBI:231331"/>
    </reaction>
    <physiologicalReaction direction="left-to-right" evidence="25">
        <dbReference type="Rhea" id="RHEA:79952"/>
    </physiologicalReaction>
</comment>
<comment type="catalytic activity">
    <reaction evidence="10">
        <text>(E)-ferulate + UDP-alpha-D-glucuronate = (E)-ferulic acid beta-D-glucuronate ester + UDP</text>
        <dbReference type="Rhea" id="RHEA:79955"/>
        <dbReference type="ChEBI" id="CHEBI:29749"/>
        <dbReference type="ChEBI" id="CHEBI:58052"/>
        <dbReference type="ChEBI" id="CHEBI:58223"/>
        <dbReference type="ChEBI" id="CHEBI:231332"/>
    </reaction>
    <physiologicalReaction direction="left-to-right" evidence="25">
        <dbReference type="Rhea" id="RHEA:79956"/>
    </physiologicalReaction>
</comment>
<comment type="catalytic activity">
    <reaction evidence="5">
        <text>losartan + UDP-alpha-D-glucuronate = losartan-2-N-beta-D-glucuronide + UDP</text>
        <dbReference type="Rhea" id="RHEA:63720"/>
        <dbReference type="ChEBI" id="CHEBI:58052"/>
        <dbReference type="ChEBI" id="CHEBI:58223"/>
        <dbReference type="ChEBI" id="CHEBI:149504"/>
        <dbReference type="ChEBI" id="CHEBI:149507"/>
    </reaction>
    <physiologicalReaction direction="left-to-right" evidence="22">
        <dbReference type="Rhea" id="RHEA:63721"/>
    </physiologicalReaction>
</comment>
<comment type="catalytic activity">
    <reaction evidence="5">
        <text>candesartan + UDP-alpha-D-glucuronate = candesartan-2-N-beta-D-glucuronide + UDP</text>
        <dbReference type="Rhea" id="RHEA:63728"/>
        <dbReference type="ChEBI" id="CHEBI:58052"/>
        <dbReference type="ChEBI" id="CHEBI:58223"/>
        <dbReference type="ChEBI" id="CHEBI:149509"/>
        <dbReference type="ChEBI" id="CHEBI:149523"/>
    </reaction>
    <physiologicalReaction direction="left-to-right" evidence="22">
        <dbReference type="Rhea" id="RHEA:63729"/>
    </physiologicalReaction>
</comment>
<comment type="catalytic activity">
    <reaction evidence="5">
        <text>zolasartan + UDP-alpha-D-glucuronate = zolarsartan-2-N-beta-D-glucuronide + UDP</text>
        <dbReference type="Rhea" id="RHEA:63748"/>
        <dbReference type="ChEBI" id="CHEBI:58052"/>
        <dbReference type="ChEBI" id="CHEBI:58223"/>
        <dbReference type="ChEBI" id="CHEBI:149524"/>
        <dbReference type="ChEBI" id="CHEBI:149528"/>
    </reaction>
    <physiologicalReaction direction="left-to-right" evidence="22">
        <dbReference type="Rhea" id="RHEA:63749"/>
    </physiologicalReaction>
</comment>
<comment type="biophysicochemical properties">
    <kinetics>
        <KM evidence="2">47 uM for 17beta-estradiol/estradiol (when assaying glucuronidation at position 3)</KM>
        <KM evidence="2">35 uM for 17beta-estradiol/estradiol (when assaying glucuronidation at position 17)</KM>
        <KM evidence="2">77 uM for estrone (when assaying glucuronidation at position 3)</KM>
        <KM evidence="2">479 uM for 2-hydroxy-17beta-estradiol (when assaying glucuronidation at position 3)</KM>
        <KM evidence="2">32 uM for 2-hydroxy-17beta-estradiol (when assaying glucuronidation at position 2)</KM>
        <KM evidence="2">587 uM for 2-hydroxy-estrone (when assaying glucuronidation at position 3)</KM>
        <KM evidence="2">222 uM for 2-hydroxy-estrone (when assaying glucuronidation at position 2)</KM>
        <KM evidence="2">49 uM for 2-methoxy-17beta-estradiol (when assaying glucuronidation at position 3)</KM>
        <KM evidence="6">250 uM for 17beta-estradiol/estradiol (when assaying glucuronidation at position 3)</KM>
        <KM evidence="6">66.7 uM for 17beta-estradiol/estradiol (when assaying glucuronidation at position 17)</KM>
        <KM evidence="6">34.2 uM for 17alpha-estradiol/epiestradiol (when assaying glucuronidation at position 3)</KM>
        <KM evidence="13">3.95 uM for calcidiol (when assaying glucuronidation at position 25)</KM>
        <KM evidence="13">5.9 uM for calcidiol (when assaying glucuronidation at position 3)</KM>
        <KM evidence="13">9.35 uM for 5,6-trans-calcidiol (when assaying glucuronidation at position 25)</KM>
        <KM evidence="10">1000 uM for (E)-ferulate (when assaying glucuronidation at the phenolic group)</KM>
        <KM evidence="10">14700 uM for (E)-ferulate (when assaying glucuronidation at the carboxylic acid group)</KM>
        <KM evidence="5">35.9 uM for losartan (when assaying glucuronidation at position N2 of the tetrazole ring)</KM>
        <Vmax evidence="2">39.0 pmol/min/mg enzyme for the formation of 17beta-estradiol 3-O-(beta-D-glucuronate)</Vmax>
        <Vmax evidence="2">13.0 pmol/min/mg enzyme for the formation of 17beta-estradiol 17-O-(beta-D-glucuronate)</Vmax>
        <Vmax evidence="2">50.0 pmol/min/mg enzyme for the formation of estrone 3-O-(beta-D-glucuronate)</Vmax>
        <Vmax evidence="2">1342.0 pmol/min/mg enzyme for the formation of 2-hydroxy-17beta-estradiol 3-O-(beta-D-glucuronate)</Vmax>
        <Vmax evidence="2">39.0 pmol/min/mg enzyme for the formation of 2-hydroxy-17beta-estradiol 2-O-(beta-D-glucuronate)</Vmax>
        <Vmax evidence="2">41.0 pmol/min/mg enzyme for the formation of 2-hydroxy-estrone 3-O-(beta-D-glucuronate)</Vmax>
        <Vmax evidence="2">28.0 pmol/min/mg enzyme for the formation of 2-hydroxy-estrone 2-O-(beta-D-glucuronate)</Vmax>
        <Vmax evidence="2">154.0 pmol/min/mg enzyme for the formation of 2-methoxy-17beta-estradiol 3-O-(beta-D-glucuronate)</Vmax>
        <Vmax evidence="6">653.0 pmol/min/mg enzyme for the formation of 17beta-estradiol 3-O-(beta-D-glucuronate)</Vmax>
        <Vmax evidence="6">86.1 pmol/min/mg enzyme for the formation of 17beta-estradiol 17-O-(beta-D-glucuronate)</Vmax>
        <Vmax evidence="6">683.0 pmol/min/mg enzyme for the formation of 17alpha-estradiol 3-O-(beta-D-glucuronate)</Vmax>
        <Vmax evidence="6">26.0 pmol/min/mg enzyme for the formation of 17alpha-estradiol 17-O-(beta-D-glucuronate)</Vmax>
        <Vmax evidence="13">1.74 pmol/min/mg enzyme for the formation of calcidiol 25-O-(beta-D-glucuronate)</Vmax>
        <Vmax evidence="13">0.56 pmol/min/mg enzyme for the formation of calcidiol 3-O-(beta-D-glucuronate)</Vmax>
        <Vmax evidence="13">0.22 pmol/min/mg enzyme for the formation of 5,6-trans-calcidiol 25-O-(beta-D-glucuronate)</Vmax>
        <Vmax evidence="10">149.4 pmol/min/mg enzyme for the formation of (E)-4-O-(beta-D-glucuronosyl)-ferulate</Vmax>
        <Vmax evidence="10">199.4 pmol/min/mg enzyme for the formation of (E)-ferulic acid beta-D-glucuronate ester</Vmax>
        <Vmax evidence="5">225.7 pmol/min/mg enzyme for the formation of losartan N2-(beta-D-glucuronate)</Vmax>
        <text evidence="28">Some kinetic parameters were assessed using commercial enzymes, which may represent a mix of both active and inactive protein forms, and therefore modify the kinetic values.</text>
    </kinetics>
</comment>
<comment type="subunit">
    <text evidence="3 9 24">Homodimer (PubMed:17179145). Homooligomer (Probable). Interacts with UGT1A1, UGT1A4, UGT1A6, UGT1A7, UGT1A8, UGT1A9 and UGT1A10 to form heterodimers (PubMed:17179145). Isoform 1 interacts with isoform 2/i2 suggesting that oligomerization is involved in negative regulation of transferase activity by isoform 2. Isoform 1 also interacts with respective i2 isoforms of UGT1A1, UGT1A4, UGT1A6, UGT1A7, UGT1A8, UGT1A9 and UGT1A10 (PubMed:20610558).</text>
</comment>
<comment type="subcellular location">
    <subcellularLocation>
        <location evidence="20">Endoplasmic reticulum membrane</location>
        <topology evidence="1">Single-pass membrane protein</topology>
    </subcellularLocation>
</comment>
<comment type="alternative products">
    <event type="alternative splicing"/>
    <isoform>
        <id>P35503-1</id>
        <name>1</name>
        <name evidence="15">i1</name>
        <sequence type="displayed"/>
    </isoform>
    <isoform>
        <id>P35503-3</id>
        <name>2</name>
        <name evidence="15">i2</name>
        <name>UGT1A3s</name>
        <sequence type="described" ref="VSP_053959"/>
    </isoform>
</comment>
<comment type="tissue specificity">
    <molecule>Isoform 1</molecule>
    <text evidence="4">Expressed in liver, kidney, colon, esophagus and small intestine.</text>
</comment>
<comment type="tissue specificity">
    <molecule>Isoform 2</molecule>
    <text evidence="4">Expressed in liver, kidney and colon. Not expressed in esophagus and small intestine.</text>
</comment>
<comment type="miscellaneous">
    <text evidence="4">UGT1A3 isoform is part of the UGT1A complex locus which displays alternative use of promoters, first exons and terminal exons. The locus is defined by 13 first exons, which are alternatively spliced to 3 other common exons and 2 alternative terminal exons 5. From the 27 possible mRNA isoforms, 9 produce functionally active polypeptides (UGT1A1, 1A3, 1A4, 1A5, 1A6, 1A7, 1A8, 1A9 and 1A10) called isoforms 1 (i1). Use of an alternative exon 5 (5b) as terminal exon is leading to 9 additional alternatively spliced products termed isoforms i2 and which lack transferase activity.</text>
</comment>
<comment type="similarity">
    <text evidence="18">Belongs to the UDP-glycosyltransferase family.</text>
</comment>
<proteinExistence type="evidence at protein level"/>
<organism>
    <name type="scientific">Homo sapiens</name>
    <name type="common">Human</name>
    <dbReference type="NCBI Taxonomy" id="9606"/>
    <lineage>
        <taxon>Eukaryota</taxon>
        <taxon>Metazoa</taxon>
        <taxon>Chordata</taxon>
        <taxon>Craniata</taxon>
        <taxon>Vertebrata</taxon>
        <taxon>Euteleostomi</taxon>
        <taxon>Mammalia</taxon>
        <taxon>Eutheria</taxon>
        <taxon>Euarchontoglires</taxon>
        <taxon>Primates</taxon>
        <taxon>Haplorrhini</taxon>
        <taxon>Catarrhini</taxon>
        <taxon>Hominidae</taxon>
        <taxon>Homo</taxon>
    </lineage>
</organism>